<gene>
    <name type="primary">Arpc1a</name>
    <name type="synonym">Sid329</name>
</gene>
<accession>Q9R0Q6</accession>
<accession>Q3UL75</accession>
<sequence>MSLHQFLLEPITCHAWNRDRTQIALSPNNHEVHIYKKNGSQWTKAHELKEHNGHITGIDWAPKSDRIVTCGADRNAYVWSQKDGIWKPTLVILRINRAATFVKWSPLENKFAVGSGARLISVCYFESENDWWVSKHIKKPIRSTVLSLDWHPNNVLLAAGSCDFKCRVFSAYIKEVDEKPASTPWGSKMPFGQLMSEFGGSGTGGWVHGVSFSASGNRLAWVSHDSTVSVADASKSVQVSTLRTEFLPLLSVSFVSENSVVAAGHDCCPMLFNYDDRGCLTFVSKLDVPKQSIQRNMSAMERFRNMDKRATTEDRNTALETLHQNSITQVSIYEVDKQDCRKFCTTGIDGAMTIWDFKTLESSIQGLRIM</sequence>
<keyword id="KW-0009">Actin-binding</keyword>
<keyword id="KW-0963">Cytoplasm</keyword>
<keyword id="KW-0206">Cytoskeleton</keyword>
<keyword id="KW-0903">Direct protein sequencing</keyword>
<keyword id="KW-0539">Nucleus</keyword>
<keyword id="KW-1185">Reference proteome</keyword>
<keyword id="KW-0677">Repeat</keyword>
<keyword id="KW-0853">WD repeat</keyword>
<name>ARC1A_MOUSE</name>
<protein>
    <recommendedName>
        <fullName>Actin-related protein 2/3 complex subunit 1A</fullName>
    </recommendedName>
    <alternativeName>
        <fullName>SOP2-like protein</fullName>
    </alternativeName>
    <alternativeName>
        <fullName>Sid 329</fullName>
    </alternativeName>
</protein>
<reference key="1">
    <citation type="submission" date="1999-03" db="EMBL/GenBank/DDBJ databases">
        <title>Mouse homolog of Sop2p-like protein.</title>
        <authorList>
            <person name="Seki N."/>
            <person name="Hattori A."/>
            <person name="Hayashi A."/>
            <person name="Kozuma S."/>
            <person name="Muramatsu M."/>
            <person name="Saito T."/>
        </authorList>
    </citation>
    <scope>NUCLEOTIDE SEQUENCE [MRNA]</scope>
</reference>
<reference key="2">
    <citation type="journal article" date="2005" name="Science">
        <title>The transcriptional landscape of the mammalian genome.</title>
        <authorList>
            <person name="Carninci P."/>
            <person name="Kasukawa T."/>
            <person name="Katayama S."/>
            <person name="Gough J."/>
            <person name="Frith M.C."/>
            <person name="Maeda N."/>
            <person name="Oyama R."/>
            <person name="Ravasi T."/>
            <person name="Lenhard B."/>
            <person name="Wells C."/>
            <person name="Kodzius R."/>
            <person name="Shimokawa K."/>
            <person name="Bajic V.B."/>
            <person name="Brenner S.E."/>
            <person name="Batalov S."/>
            <person name="Forrest A.R."/>
            <person name="Zavolan M."/>
            <person name="Davis M.J."/>
            <person name="Wilming L.G."/>
            <person name="Aidinis V."/>
            <person name="Allen J.E."/>
            <person name="Ambesi-Impiombato A."/>
            <person name="Apweiler R."/>
            <person name="Aturaliya R.N."/>
            <person name="Bailey T.L."/>
            <person name="Bansal M."/>
            <person name="Baxter L."/>
            <person name="Beisel K.W."/>
            <person name="Bersano T."/>
            <person name="Bono H."/>
            <person name="Chalk A.M."/>
            <person name="Chiu K.P."/>
            <person name="Choudhary V."/>
            <person name="Christoffels A."/>
            <person name="Clutterbuck D.R."/>
            <person name="Crowe M.L."/>
            <person name="Dalla E."/>
            <person name="Dalrymple B.P."/>
            <person name="de Bono B."/>
            <person name="Della Gatta G."/>
            <person name="di Bernardo D."/>
            <person name="Down T."/>
            <person name="Engstrom P."/>
            <person name="Fagiolini M."/>
            <person name="Faulkner G."/>
            <person name="Fletcher C.F."/>
            <person name="Fukushima T."/>
            <person name="Furuno M."/>
            <person name="Futaki S."/>
            <person name="Gariboldi M."/>
            <person name="Georgii-Hemming P."/>
            <person name="Gingeras T.R."/>
            <person name="Gojobori T."/>
            <person name="Green R.E."/>
            <person name="Gustincich S."/>
            <person name="Harbers M."/>
            <person name="Hayashi Y."/>
            <person name="Hensch T.K."/>
            <person name="Hirokawa N."/>
            <person name="Hill D."/>
            <person name="Huminiecki L."/>
            <person name="Iacono M."/>
            <person name="Ikeo K."/>
            <person name="Iwama A."/>
            <person name="Ishikawa T."/>
            <person name="Jakt M."/>
            <person name="Kanapin A."/>
            <person name="Katoh M."/>
            <person name="Kawasawa Y."/>
            <person name="Kelso J."/>
            <person name="Kitamura H."/>
            <person name="Kitano H."/>
            <person name="Kollias G."/>
            <person name="Krishnan S.P."/>
            <person name="Kruger A."/>
            <person name="Kummerfeld S.K."/>
            <person name="Kurochkin I.V."/>
            <person name="Lareau L.F."/>
            <person name="Lazarevic D."/>
            <person name="Lipovich L."/>
            <person name="Liu J."/>
            <person name="Liuni S."/>
            <person name="McWilliam S."/>
            <person name="Madan Babu M."/>
            <person name="Madera M."/>
            <person name="Marchionni L."/>
            <person name="Matsuda H."/>
            <person name="Matsuzawa S."/>
            <person name="Miki H."/>
            <person name="Mignone F."/>
            <person name="Miyake S."/>
            <person name="Morris K."/>
            <person name="Mottagui-Tabar S."/>
            <person name="Mulder N."/>
            <person name="Nakano N."/>
            <person name="Nakauchi H."/>
            <person name="Ng P."/>
            <person name="Nilsson R."/>
            <person name="Nishiguchi S."/>
            <person name="Nishikawa S."/>
            <person name="Nori F."/>
            <person name="Ohara O."/>
            <person name="Okazaki Y."/>
            <person name="Orlando V."/>
            <person name="Pang K.C."/>
            <person name="Pavan W.J."/>
            <person name="Pavesi G."/>
            <person name="Pesole G."/>
            <person name="Petrovsky N."/>
            <person name="Piazza S."/>
            <person name="Reed J."/>
            <person name="Reid J.F."/>
            <person name="Ring B.Z."/>
            <person name="Ringwald M."/>
            <person name="Rost B."/>
            <person name="Ruan Y."/>
            <person name="Salzberg S.L."/>
            <person name="Sandelin A."/>
            <person name="Schneider C."/>
            <person name="Schoenbach C."/>
            <person name="Sekiguchi K."/>
            <person name="Semple C.A."/>
            <person name="Seno S."/>
            <person name="Sessa L."/>
            <person name="Sheng Y."/>
            <person name="Shibata Y."/>
            <person name="Shimada H."/>
            <person name="Shimada K."/>
            <person name="Silva D."/>
            <person name="Sinclair B."/>
            <person name="Sperling S."/>
            <person name="Stupka E."/>
            <person name="Sugiura K."/>
            <person name="Sultana R."/>
            <person name="Takenaka Y."/>
            <person name="Taki K."/>
            <person name="Tammoja K."/>
            <person name="Tan S.L."/>
            <person name="Tang S."/>
            <person name="Taylor M.S."/>
            <person name="Tegner J."/>
            <person name="Teichmann S.A."/>
            <person name="Ueda H.R."/>
            <person name="van Nimwegen E."/>
            <person name="Verardo R."/>
            <person name="Wei C.L."/>
            <person name="Yagi K."/>
            <person name="Yamanishi H."/>
            <person name="Zabarovsky E."/>
            <person name="Zhu S."/>
            <person name="Zimmer A."/>
            <person name="Hide W."/>
            <person name="Bult C."/>
            <person name="Grimmond S.M."/>
            <person name="Teasdale R.D."/>
            <person name="Liu E.T."/>
            <person name="Brusic V."/>
            <person name="Quackenbush J."/>
            <person name="Wahlestedt C."/>
            <person name="Mattick J.S."/>
            <person name="Hume D.A."/>
            <person name="Kai C."/>
            <person name="Sasaki D."/>
            <person name="Tomaru Y."/>
            <person name="Fukuda S."/>
            <person name="Kanamori-Katayama M."/>
            <person name="Suzuki M."/>
            <person name="Aoki J."/>
            <person name="Arakawa T."/>
            <person name="Iida J."/>
            <person name="Imamura K."/>
            <person name="Itoh M."/>
            <person name="Kato T."/>
            <person name="Kawaji H."/>
            <person name="Kawagashira N."/>
            <person name="Kawashima T."/>
            <person name="Kojima M."/>
            <person name="Kondo S."/>
            <person name="Konno H."/>
            <person name="Nakano K."/>
            <person name="Ninomiya N."/>
            <person name="Nishio T."/>
            <person name="Okada M."/>
            <person name="Plessy C."/>
            <person name="Shibata K."/>
            <person name="Shiraki T."/>
            <person name="Suzuki S."/>
            <person name="Tagami M."/>
            <person name="Waki K."/>
            <person name="Watahiki A."/>
            <person name="Okamura-Oho Y."/>
            <person name="Suzuki H."/>
            <person name="Kawai J."/>
            <person name="Hayashizaki Y."/>
        </authorList>
    </citation>
    <scope>NUCLEOTIDE SEQUENCE [LARGE SCALE MRNA]</scope>
    <source>
        <strain>C57BL/6J</strain>
    </source>
</reference>
<reference key="3">
    <citation type="journal article" date="2004" name="Genome Res.">
        <title>The status, quality, and expansion of the NIH full-length cDNA project: the Mammalian Gene Collection (MGC).</title>
        <authorList>
            <consortium name="The MGC Project Team"/>
        </authorList>
    </citation>
    <scope>NUCLEOTIDE SEQUENCE [LARGE SCALE MRNA]</scope>
    <source>
        <strain>FVB/N</strain>
        <tissue>Mammary tumor</tissue>
    </source>
</reference>
<reference key="4">
    <citation type="submission" date="2009-01" db="UniProtKB">
        <authorList>
            <person name="Lubec G."/>
            <person name="Sunyer B."/>
            <person name="Chen W.-Q."/>
        </authorList>
    </citation>
    <scope>PROTEIN SEQUENCE OF 236-243 AND 359-368</scope>
    <scope>IDENTIFICATION BY MASS SPECTROMETRY</scope>
    <source>
        <strain>OF1</strain>
        <tissue>Hippocampus</tissue>
    </source>
</reference>
<reference key="5">
    <citation type="journal article" date="2010" name="Cell">
        <title>A tissue-specific atlas of mouse protein phosphorylation and expression.</title>
        <authorList>
            <person name="Huttlin E.L."/>
            <person name="Jedrychowski M.P."/>
            <person name="Elias J.E."/>
            <person name="Goswami T."/>
            <person name="Rad R."/>
            <person name="Beausoleil S.A."/>
            <person name="Villen J."/>
            <person name="Haas W."/>
            <person name="Sowa M.E."/>
            <person name="Gygi S.P."/>
        </authorList>
    </citation>
    <scope>IDENTIFICATION BY MASS SPECTROMETRY [LARGE SCALE ANALYSIS]</scope>
    <source>
        <tissue>Brain</tissue>
        <tissue>Heart</tissue>
        <tissue>Kidney</tissue>
        <tissue>Liver</tissue>
        <tissue>Lung</tissue>
        <tissue>Spleen</tissue>
        <tissue>Testis</tissue>
    </source>
</reference>
<comment type="function">
    <text evidence="1 2">Probably functions as a component of the Arp2/3 complex which is involved in regulation of actin polymerization and together with an activating nucleation-promoting factor (NPF) mediates the formation of branched actin networks (By similarity). In addition to its role in the cytoplasmic cytoskeleton, the Arp2/3 complex also promotes actin polymerization in the nucleus, thereby regulating gene transcription and repair of damaged DNA (By similarity).</text>
</comment>
<comment type="subunit">
    <text evidence="2">Probable component of the Arp2/3 complex in which it may replace ARPC1B.</text>
</comment>
<comment type="subcellular location">
    <subcellularLocation>
        <location evidence="2">Cytoplasm</location>
        <location evidence="2">Cytoskeleton</location>
    </subcellularLocation>
    <subcellularLocation>
        <location evidence="1">Nucleus</location>
    </subcellularLocation>
</comment>
<comment type="similarity">
    <text evidence="3">Belongs to the WD repeat ARPC1 family.</text>
</comment>
<feature type="chain" id="PRO_0000050853" description="Actin-related protein 2/3 complex subunit 1A">
    <location>
        <begin position="1"/>
        <end position="370"/>
    </location>
</feature>
<feature type="repeat" description="WD 1">
    <location>
        <begin position="6"/>
        <end position="45"/>
    </location>
</feature>
<feature type="repeat" description="WD 2">
    <location>
        <begin position="50"/>
        <end position="89"/>
    </location>
</feature>
<feature type="repeat" description="WD 3">
    <location>
        <begin position="140"/>
        <end position="179"/>
    </location>
</feature>
<feature type="repeat" description="WD 4">
    <location>
        <begin position="202"/>
        <end position="241"/>
    </location>
</feature>
<feature type="repeat" description="WD 5">
    <location>
        <begin position="244"/>
        <end position="284"/>
    </location>
</feature>
<feature type="repeat" description="WD 6">
    <location>
        <begin position="322"/>
        <end position="365"/>
    </location>
</feature>
<organism>
    <name type="scientific">Mus musculus</name>
    <name type="common">Mouse</name>
    <dbReference type="NCBI Taxonomy" id="10090"/>
    <lineage>
        <taxon>Eukaryota</taxon>
        <taxon>Metazoa</taxon>
        <taxon>Chordata</taxon>
        <taxon>Craniata</taxon>
        <taxon>Vertebrata</taxon>
        <taxon>Euteleostomi</taxon>
        <taxon>Mammalia</taxon>
        <taxon>Eutheria</taxon>
        <taxon>Euarchontoglires</taxon>
        <taxon>Glires</taxon>
        <taxon>Rodentia</taxon>
        <taxon>Myomorpha</taxon>
        <taxon>Muroidea</taxon>
        <taxon>Muridae</taxon>
        <taxon>Murinae</taxon>
        <taxon>Mus</taxon>
        <taxon>Mus</taxon>
    </lineage>
</organism>
<proteinExistence type="evidence at protein level"/>
<evidence type="ECO:0000250" key="1">
    <source>
        <dbReference type="UniProtKB" id="Q8AVT9"/>
    </source>
</evidence>
<evidence type="ECO:0000250" key="2">
    <source>
        <dbReference type="UniProtKB" id="Q92747"/>
    </source>
</evidence>
<evidence type="ECO:0000305" key="3"/>
<dbReference type="EMBL" id="AB024984">
    <property type="protein sequence ID" value="BAA84685.1"/>
    <property type="molecule type" value="mRNA"/>
</dbReference>
<dbReference type="EMBL" id="AK076107">
    <property type="protein sequence ID" value="BAC36187.1"/>
    <property type="molecule type" value="mRNA"/>
</dbReference>
<dbReference type="EMBL" id="AK145663">
    <property type="protein sequence ID" value="BAE26575.1"/>
    <property type="molecule type" value="mRNA"/>
</dbReference>
<dbReference type="EMBL" id="BC001988">
    <property type="protein sequence ID" value="AAH01988.1"/>
    <property type="molecule type" value="mRNA"/>
</dbReference>
<dbReference type="CCDS" id="CCDS19855.1"/>
<dbReference type="RefSeq" id="NP_062741.1">
    <property type="nucleotide sequence ID" value="NM_019767.2"/>
</dbReference>
<dbReference type="SMR" id="Q9R0Q6"/>
<dbReference type="BioGRID" id="207984">
    <property type="interactions" value="22"/>
</dbReference>
<dbReference type="FunCoup" id="Q9R0Q6">
    <property type="interactions" value="2331"/>
</dbReference>
<dbReference type="IntAct" id="Q9R0Q6">
    <property type="interactions" value="4"/>
</dbReference>
<dbReference type="MINT" id="Q9R0Q6"/>
<dbReference type="STRING" id="10090.ENSMUSP00000031625"/>
<dbReference type="GlyConnect" id="2106">
    <property type="glycosylation" value="1 N-Linked glycan (1 site)"/>
</dbReference>
<dbReference type="GlyCosmos" id="Q9R0Q6">
    <property type="glycosylation" value="1 site, 1 glycan"/>
</dbReference>
<dbReference type="GlyGen" id="Q9R0Q6">
    <property type="glycosylation" value="3 sites, 2 N-linked glycans (2 sites), 1 O-linked glycan (1 site)"/>
</dbReference>
<dbReference type="iPTMnet" id="Q9R0Q6"/>
<dbReference type="PhosphoSitePlus" id="Q9R0Q6"/>
<dbReference type="SwissPalm" id="Q9R0Q6"/>
<dbReference type="jPOST" id="Q9R0Q6"/>
<dbReference type="PaxDb" id="10090-ENSMUSP00000031625"/>
<dbReference type="PeptideAtlas" id="Q9R0Q6"/>
<dbReference type="ProteomicsDB" id="283197"/>
<dbReference type="Pumba" id="Q9R0Q6"/>
<dbReference type="DNASU" id="56443"/>
<dbReference type="Ensembl" id="ENSMUST00000031625.15">
    <property type="protein sequence ID" value="ENSMUSP00000031625.9"/>
    <property type="gene ID" value="ENSMUSG00000029621.15"/>
</dbReference>
<dbReference type="GeneID" id="56443"/>
<dbReference type="KEGG" id="mmu:56443"/>
<dbReference type="UCSC" id="uc009ama.1">
    <property type="organism name" value="mouse"/>
</dbReference>
<dbReference type="AGR" id="MGI:1928896"/>
<dbReference type="CTD" id="10552"/>
<dbReference type="MGI" id="MGI:1928896">
    <property type="gene designation" value="Arpc1a"/>
</dbReference>
<dbReference type="VEuPathDB" id="HostDB:ENSMUSG00000029621"/>
<dbReference type="eggNOG" id="KOG1523">
    <property type="taxonomic scope" value="Eukaryota"/>
</dbReference>
<dbReference type="GeneTree" id="ENSGT00950000183183"/>
<dbReference type="HOGENOM" id="CLU_034396_1_0_1"/>
<dbReference type="InParanoid" id="Q9R0Q6"/>
<dbReference type="OMA" id="YVWEPSP"/>
<dbReference type="OrthoDB" id="406844at2759"/>
<dbReference type="PhylomeDB" id="Q9R0Q6"/>
<dbReference type="TreeFam" id="TF315041"/>
<dbReference type="Reactome" id="R-MMU-2029482">
    <property type="pathway name" value="Regulation of actin dynamics for phagocytic cup formation"/>
</dbReference>
<dbReference type="Reactome" id="R-MMU-3928662">
    <property type="pathway name" value="EPHB-mediated forward signaling"/>
</dbReference>
<dbReference type="Reactome" id="R-MMU-5663213">
    <property type="pathway name" value="RHO GTPases Activate WASPs and WAVEs"/>
</dbReference>
<dbReference type="Reactome" id="R-MMU-8856828">
    <property type="pathway name" value="Clathrin-mediated endocytosis"/>
</dbReference>
<dbReference type="BioGRID-ORCS" id="56443">
    <property type="hits" value="6 hits in 79 CRISPR screens"/>
</dbReference>
<dbReference type="CD-CODE" id="CE726F99">
    <property type="entry name" value="Postsynaptic density"/>
</dbReference>
<dbReference type="ChiTaRS" id="Arpc1a">
    <property type="organism name" value="mouse"/>
</dbReference>
<dbReference type="PRO" id="PR:Q9R0Q6"/>
<dbReference type="Proteomes" id="UP000000589">
    <property type="component" value="Chromosome 5"/>
</dbReference>
<dbReference type="RNAct" id="Q9R0Q6">
    <property type="molecule type" value="protein"/>
</dbReference>
<dbReference type="Bgee" id="ENSMUSG00000029621">
    <property type="expression patterns" value="Expressed in urinary bladder urothelium and 269 other cell types or tissues"/>
</dbReference>
<dbReference type="ExpressionAtlas" id="Q9R0Q6">
    <property type="expression patterns" value="baseline and differential"/>
</dbReference>
<dbReference type="GO" id="GO:0005885">
    <property type="term" value="C:Arp2/3 protein complex"/>
    <property type="evidence" value="ECO:0000250"/>
    <property type="project" value="UniProtKB"/>
</dbReference>
<dbReference type="GO" id="GO:0005737">
    <property type="term" value="C:cytoplasm"/>
    <property type="evidence" value="ECO:0007669"/>
    <property type="project" value="UniProtKB-KW"/>
</dbReference>
<dbReference type="GO" id="GO:0098978">
    <property type="term" value="C:glutamatergic synapse"/>
    <property type="evidence" value="ECO:0000314"/>
    <property type="project" value="SynGO"/>
</dbReference>
<dbReference type="GO" id="GO:0036195">
    <property type="term" value="C:muscle cell projection membrane"/>
    <property type="evidence" value="ECO:0000314"/>
    <property type="project" value="MGI"/>
</dbReference>
<dbReference type="GO" id="GO:0005634">
    <property type="term" value="C:nucleus"/>
    <property type="evidence" value="ECO:0000250"/>
    <property type="project" value="UniProtKB"/>
</dbReference>
<dbReference type="GO" id="GO:0035861">
    <property type="term" value="C:site of double-strand break"/>
    <property type="evidence" value="ECO:0000250"/>
    <property type="project" value="UniProtKB"/>
</dbReference>
<dbReference type="GO" id="GO:0045202">
    <property type="term" value="C:synapse"/>
    <property type="evidence" value="ECO:0000314"/>
    <property type="project" value="SynGO"/>
</dbReference>
<dbReference type="GO" id="GO:0003779">
    <property type="term" value="F:actin binding"/>
    <property type="evidence" value="ECO:0007669"/>
    <property type="project" value="UniProtKB-KW"/>
</dbReference>
<dbReference type="GO" id="GO:0034314">
    <property type="term" value="P:Arp2/3 complex-mediated actin nucleation"/>
    <property type="evidence" value="ECO:0007669"/>
    <property type="project" value="InterPro"/>
</dbReference>
<dbReference type="FunFam" id="2.130.10.10:FF:000030">
    <property type="entry name" value="Actin-related protein 2/3 complex subunit"/>
    <property type="match status" value="1"/>
</dbReference>
<dbReference type="Gene3D" id="2.130.10.10">
    <property type="entry name" value="YVTN repeat-like/Quinoprotein amine dehydrogenase"/>
    <property type="match status" value="1"/>
</dbReference>
<dbReference type="InterPro" id="IPR017383">
    <property type="entry name" value="ARPC1"/>
</dbReference>
<dbReference type="InterPro" id="IPR015943">
    <property type="entry name" value="WD40/YVTN_repeat-like_dom_sf"/>
</dbReference>
<dbReference type="InterPro" id="IPR036322">
    <property type="entry name" value="WD40_repeat_dom_sf"/>
</dbReference>
<dbReference type="InterPro" id="IPR001680">
    <property type="entry name" value="WD40_rpt"/>
</dbReference>
<dbReference type="PANTHER" id="PTHR10709">
    <property type="entry name" value="ACTIN-RELATED PROTEIN 2/3 COMPLEX SUBUNIT 1"/>
    <property type="match status" value="1"/>
</dbReference>
<dbReference type="PANTHER" id="PTHR10709:SF11">
    <property type="entry name" value="ACTIN-RELATED PROTEIN 2_3 COMPLEX SUBUNIT 1A"/>
    <property type="match status" value="1"/>
</dbReference>
<dbReference type="Pfam" id="PF00400">
    <property type="entry name" value="WD40"/>
    <property type="match status" value="2"/>
</dbReference>
<dbReference type="PIRSF" id="PIRSF038093">
    <property type="entry name" value="ARP2/3_su1"/>
    <property type="match status" value="1"/>
</dbReference>
<dbReference type="SMART" id="SM00320">
    <property type="entry name" value="WD40"/>
    <property type="match status" value="6"/>
</dbReference>
<dbReference type="SUPFAM" id="SSF50978">
    <property type="entry name" value="WD40 repeat-like"/>
    <property type="match status" value="1"/>
</dbReference>
<dbReference type="PROSITE" id="PS50082">
    <property type="entry name" value="WD_REPEATS_2"/>
    <property type="match status" value="1"/>
</dbReference>
<dbReference type="PROSITE" id="PS50294">
    <property type="entry name" value="WD_REPEATS_REGION"/>
    <property type="match status" value="1"/>
</dbReference>